<gene>
    <name type="primary">HYKK</name>
    <name type="synonym">AGPHD1</name>
</gene>
<accession>A5PJU6</accession>
<comment type="function">
    <text evidence="1">Catalyzes the GTP-dependent phosphorylation of 5-hydroxy-L-lysine.</text>
</comment>
<comment type="catalytic activity">
    <reaction>
        <text>(5R)-5-hydroxy-L-lysine + GTP = (5R)-5-phosphooxy-L-lysine + GDP + H(+)</text>
        <dbReference type="Rhea" id="RHEA:19049"/>
        <dbReference type="ChEBI" id="CHEBI:15378"/>
        <dbReference type="ChEBI" id="CHEBI:37565"/>
        <dbReference type="ChEBI" id="CHEBI:57882"/>
        <dbReference type="ChEBI" id="CHEBI:58189"/>
        <dbReference type="ChEBI" id="CHEBI:58357"/>
        <dbReference type="EC" id="2.7.1.81"/>
    </reaction>
</comment>
<comment type="subcellular location">
    <subcellularLocation>
        <location evidence="2">Cytoplasm</location>
    </subcellularLocation>
</comment>
<comment type="similarity">
    <text evidence="2">Belongs to the aminoglycoside phosphotransferase family.</text>
</comment>
<organism>
    <name type="scientific">Bos taurus</name>
    <name type="common">Bovine</name>
    <dbReference type="NCBI Taxonomy" id="9913"/>
    <lineage>
        <taxon>Eukaryota</taxon>
        <taxon>Metazoa</taxon>
        <taxon>Chordata</taxon>
        <taxon>Craniata</taxon>
        <taxon>Vertebrata</taxon>
        <taxon>Euteleostomi</taxon>
        <taxon>Mammalia</taxon>
        <taxon>Eutheria</taxon>
        <taxon>Laurasiatheria</taxon>
        <taxon>Artiodactyla</taxon>
        <taxon>Ruminantia</taxon>
        <taxon>Pecora</taxon>
        <taxon>Bovidae</taxon>
        <taxon>Bovinae</taxon>
        <taxon>Bos</taxon>
    </lineage>
</organism>
<keyword id="KW-0963">Cytoplasm</keyword>
<keyword id="KW-0418">Kinase</keyword>
<keyword id="KW-1185">Reference proteome</keyword>
<keyword id="KW-0808">Transferase</keyword>
<name>HYKK_BOVIN</name>
<proteinExistence type="evidence at transcript level"/>
<sequence>MSSGDGQQSQALTKPSFSEVQASALVESVFGLKVSKIQPLPSYDDQNFHVCIARTKVTTDGPNECVLKISNTESSKTPDLIEVQTHIIMFLRAAGFPTASVCRTKGDNVSSLVSVDSGSEVKSYLVRLLTYLPGRPIAEIPIGPQLLYEIGRLAAKLDKTLEKFHHPKLSSLHRENFIWNLKSVPLLEKYLYALGQNRNREIVEQVIQLFKDEVMTSLSHFRECINHGDLNDHNILIVSSESAFGDAVYQVSGILDFDDMSYGYYVFEVAITIMYMMIESKTPIQVGGHVLAGFESVVPLTPVERGALFLLVCSRFCQSLVLAAYSCQLYPENEEYLMITAKTGWKHLQQMFDMGRKAVEEIWFETAKSYESGISM</sequence>
<protein>
    <recommendedName>
        <fullName>Hydroxylysine kinase</fullName>
        <shortName>5-hydroxy-L-lysine kinase</shortName>
        <ecNumber>2.7.1.81</ecNumber>
    </recommendedName>
    <alternativeName>
        <fullName>Aminoglycoside phosphotransferase domain-containing protein 1</fullName>
    </alternativeName>
</protein>
<reference key="1">
    <citation type="submission" date="2007-06" db="EMBL/GenBank/DDBJ databases">
        <authorList>
            <consortium name="NIH - Mammalian Gene Collection (MGC) project"/>
        </authorList>
    </citation>
    <scope>NUCLEOTIDE SEQUENCE [LARGE SCALE MRNA]</scope>
    <source>
        <strain>Hereford</strain>
        <tissue>Thymus</tissue>
    </source>
</reference>
<dbReference type="EC" id="2.7.1.81"/>
<dbReference type="EMBL" id="BC142244">
    <property type="protein sequence ID" value="AAI42245.1"/>
    <property type="molecule type" value="mRNA"/>
</dbReference>
<dbReference type="RefSeq" id="NP_001092517.1">
    <property type="nucleotide sequence ID" value="NM_001099047.2"/>
</dbReference>
<dbReference type="RefSeq" id="XP_005222020.1">
    <property type="nucleotide sequence ID" value="XM_005221963.5"/>
</dbReference>
<dbReference type="RefSeq" id="XP_005222021.1">
    <property type="nucleotide sequence ID" value="XM_005221964.5"/>
</dbReference>
<dbReference type="RefSeq" id="XP_005222022.1">
    <property type="nucleotide sequence ID" value="XM_005221965.5"/>
</dbReference>
<dbReference type="RefSeq" id="XP_010815382.1">
    <property type="nucleotide sequence ID" value="XM_010817080.2"/>
</dbReference>
<dbReference type="RefSeq" id="XP_010815383.1">
    <property type="nucleotide sequence ID" value="XM_010817081.2"/>
</dbReference>
<dbReference type="RefSeq" id="XP_015314730.1">
    <property type="nucleotide sequence ID" value="XM_015459244.1"/>
</dbReference>
<dbReference type="RefSeq" id="XP_024837612.1">
    <property type="nucleotide sequence ID" value="XM_024981844.2"/>
</dbReference>
<dbReference type="RefSeq" id="XP_059735069.1">
    <property type="nucleotide sequence ID" value="XM_059879086.1"/>
</dbReference>
<dbReference type="SMR" id="A5PJU6"/>
<dbReference type="FunCoup" id="A5PJU6">
    <property type="interactions" value="515"/>
</dbReference>
<dbReference type="STRING" id="9913.ENSBTAP00000002339"/>
<dbReference type="PaxDb" id="9913-ENSBTAP00000002339"/>
<dbReference type="Ensembl" id="ENSBTAT00000002339.6">
    <property type="protein sequence ID" value="ENSBTAP00000002339.4"/>
    <property type="gene ID" value="ENSBTAG00000001786.7"/>
</dbReference>
<dbReference type="GeneID" id="530270"/>
<dbReference type="KEGG" id="bta:530270"/>
<dbReference type="CTD" id="123688"/>
<dbReference type="VEuPathDB" id="HostDB:ENSBTAG00000001786"/>
<dbReference type="VGNC" id="VGNC:30013">
    <property type="gene designation" value="HYKK"/>
</dbReference>
<dbReference type="eggNOG" id="ENOG502QT7T">
    <property type="taxonomic scope" value="Eukaryota"/>
</dbReference>
<dbReference type="GeneTree" id="ENSGT00390000011314"/>
<dbReference type="HOGENOM" id="CLU_042971_1_1_1"/>
<dbReference type="InParanoid" id="A5PJU6"/>
<dbReference type="OMA" id="AAHSCQL"/>
<dbReference type="OrthoDB" id="9973935at2759"/>
<dbReference type="TreeFam" id="TF324471"/>
<dbReference type="Reactome" id="R-BTA-71064">
    <property type="pathway name" value="Lysine catabolism"/>
</dbReference>
<dbReference type="Proteomes" id="UP000009136">
    <property type="component" value="Chromosome 21"/>
</dbReference>
<dbReference type="Bgee" id="ENSBTAG00000001786">
    <property type="expression patterns" value="Expressed in metanephros cortex and 105 other cell types or tissues"/>
</dbReference>
<dbReference type="GO" id="GO:0005737">
    <property type="term" value="C:cytoplasm"/>
    <property type="evidence" value="ECO:0007669"/>
    <property type="project" value="UniProtKB-SubCell"/>
</dbReference>
<dbReference type="GO" id="GO:0019202">
    <property type="term" value="F:amino acid kinase activity"/>
    <property type="evidence" value="ECO:0000318"/>
    <property type="project" value="GO_Central"/>
</dbReference>
<dbReference type="GO" id="GO:0047992">
    <property type="term" value="F:hydroxylysine kinase activity"/>
    <property type="evidence" value="ECO:0007669"/>
    <property type="project" value="UniProtKB-EC"/>
</dbReference>
<dbReference type="FunFam" id="3.30.200.20:FF:000549">
    <property type="entry name" value="hydroxylysine kinase"/>
    <property type="match status" value="1"/>
</dbReference>
<dbReference type="FunFam" id="3.90.1200.10:FF:000007">
    <property type="entry name" value="hydroxylysine kinase isoform X1"/>
    <property type="match status" value="1"/>
</dbReference>
<dbReference type="Gene3D" id="3.90.1200.10">
    <property type="match status" value="1"/>
</dbReference>
<dbReference type="InterPro" id="IPR002575">
    <property type="entry name" value="Aminoglycoside_PTrfase"/>
</dbReference>
<dbReference type="InterPro" id="IPR011009">
    <property type="entry name" value="Kinase-like_dom_sf"/>
</dbReference>
<dbReference type="InterPro" id="IPR050249">
    <property type="entry name" value="Pseudomonas-type_ThrB"/>
</dbReference>
<dbReference type="PANTHER" id="PTHR21064">
    <property type="entry name" value="AMINOGLYCOSIDE PHOSPHOTRANSFERASE DOMAIN-CONTAINING PROTEIN-RELATED"/>
    <property type="match status" value="1"/>
</dbReference>
<dbReference type="PANTHER" id="PTHR21064:SF1">
    <property type="entry name" value="HYDROXYLYSINE KINASE"/>
    <property type="match status" value="1"/>
</dbReference>
<dbReference type="Pfam" id="PF01636">
    <property type="entry name" value="APH"/>
    <property type="match status" value="1"/>
</dbReference>
<dbReference type="SUPFAM" id="SSF56112">
    <property type="entry name" value="Protein kinase-like (PK-like)"/>
    <property type="match status" value="1"/>
</dbReference>
<evidence type="ECO:0000250" key="1"/>
<evidence type="ECO:0000305" key="2"/>
<feature type="chain" id="PRO_0000326043" description="Hydroxylysine kinase">
    <location>
        <begin position="1"/>
        <end position="376"/>
    </location>
</feature>
<feature type="active site" description="Proton acceptor" evidence="1">
    <location>
        <position position="229"/>
    </location>
</feature>